<reference key="1">
    <citation type="journal article" date="2003" name="Lancet">
        <title>Genome sequence of Vibrio parahaemolyticus: a pathogenic mechanism distinct from that of V. cholerae.</title>
        <authorList>
            <person name="Makino K."/>
            <person name="Oshima K."/>
            <person name="Kurokawa K."/>
            <person name="Yokoyama K."/>
            <person name="Uda T."/>
            <person name="Tagomori K."/>
            <person name="Iijima Y."/>
            <person name="Najima M."/>
            <person name="Nakano M."/>
            <person name="Yamashita A."/>
            <person name="Kubota Y."/>
            <person name="Kimura S."/>
            <person name="Yasunaga T."/>
            <person name="Honda T."/>
            <person name="Shinagawa H."/>
            <person name="Hattori M."/>
            <person name="Iida T."/>
        </authorList>
    </citation>
    <scope>NUCLEOTIDE SEQUENCE [LARGE SCALE GENOMIC DNA]</scope>
    <source>
        <strain>RIMD 2210633</strain>
    </source>
</reference>
<accession>Q87TQ7</accession>
<gene>
    <name evidence="1" type="primary">dnaA</name>
    <name type="ordered locus">VP0011</name>
</gene>
<evidence type="ECO:0000255" key="1">
    <source>
        <dbReference type="HAMAP-Rule" id="MF_00377"/>
    </source>
</evidence>
<evidence type="ECO:0000256" key="2">
    <source>
        <dbReference type="SAM" id="MobiDB-lite"/>
    </source>
</evidence>
<sequence>MSSSLWLQCLQQLQEELPATEFSMWVRPLQAELNDNTLTLFAPNRFVLDWVRDKYLNSITRLLQEYCGNDIPNLRFEVGSRPVSAPKPAPTRTPADVAAESSAPAQLQARKPVHKTWDDDPQAIAAINHRSNMNPKHKFDNFVEGKSNQLGLAAARQVSDNPGAAYNPLFLYGGTGLGKTHLLHAVGNAIVDNNPNAKVVYMHSERFVQDMVKALQNNAIEEFKRYYRSVDALLIDDIQFFANKERSQEEFFHTFNALLEGNQQIILTSDRYPKEISGVEDRLKSRFGWGLTVAIEPPELETRVAILMKKAEDHQIHLADEVAFFIAKRLRSNVRELEGALNRVIANANFTGRPITIDFVREALRDLLALQEKLVTIDNIQKTVAEYYKIKVADLLSKRRSRSVARPRQLAMALAKELTNHSLPEIGDAFGGRDHTTVLHACRKIEQLREESHDIKEDYSNLIRTLSS</sequence>
<protein>
    <recommendedName>
        <fullName evidence="1">Chromosomal replication initiator protein DnaA</fullName>
    </recommendedName>
</protein>
<feature type="chain" id="PRO_0000114298" description="Chromosomal replication initiator protein DnaA">
    <location>
        <begin position="1"/>
        <end position="468"/>
    </location>
</feature>
<feature type="region of interest" description="Domain I, interacts with DnaA modulators" evidence="1">
    <location>
        <begin position="1"/>
        <end position="84"/>
    </location>
</feature>
<feature type="region of interest" description="Disordered" evidence="2">
    <location>
        <begin position="80"/>
        <end position="106"/>
    </location>
</feature>
<feature type="region of interest" description="Domain II" evidence="1">
    <location>
        <begin position="84"/>
        <end position="131"/>
    </location>
</feature>
<feature type="region of interest" description="Domain III, AAA+ region" evidence="1">
    <location>
        <begin position="132"/>
        <end position="348"/>
    </location>
</feature>
<feature type="region of interest" description="Domain IV, binds dsDNA" evidence="1">
    <location>
        <begin position="349"/>
        <end position="468"/>
    </location>
</feature>
<feature type="binding site" evidence="1">
    <location>
        <position position="176"/>
    </location>
    <ligand>
        <name>ATP</name>
        <dbReference type="ChEBI" id="CHEBI:30616"/>
    </ligand>
</feature>
<feature type="binding site" evidence="1">
    <location>
        <position position="178"/>
    </location>
    <ligand>
        <name>ATP</name>
        <dbReference type="ChEBI" id="CHEBI:30616"/>
    </ligand>
</feature>
<feature type="binding site" evidence="1">
    <location>
        <position position="179"/>
    </location>
    <ligand>
        <name>ATP</name>
        <dbReference type="ChEBI" id="CHEBI:30616"/>
    </ligand>
</feature>
<feature type="binding site" evidence="1">
    <location>
        <position position="180"/>
    </location>
    <ligand>
        <name>ATP</name>
        <dbReference type="ChEBI" id="CHEBI:30616"/>
    </ligand>
</feature>
<organism>
    <name type="scientific">Vibrio parahaemolyticus serotype O3:K6 (strain RIMD 2210633)</name>
    <dbReference type="NCBI Taxonomy" id="223926"/>
    <lineage>
        <taxon>Bacteria</taxon>
        <taxon>Pseudomonadati</taxon>
        <taxon>Pseudomonadota</taxon>
        <taxon>Gammaproteobacteria</taxon>
        <taxon>Vibrionales</taxon>
        <taxon>Vibrionaceae</taxon>
        <taxon>Vibrio</taxon>
    </lineage>
</organism>
<proteinExistence type="inferred from homology"/>
<comment type="function">
    <text evidence="1">Plays an essential role in the initiation and regulation of chromosomal replication. ATP-DnaA binds to the origin of replication (oriC) to initiate formation of the DNA replication initiation complex once per cell cycle. Binds the DnaA box (a 9 base pair repeat at the origin) and separates the double-stranded (ds)DNA. Forms a right-handed helical filament on oriC DNA; dsDNA binds to the exterior of the filament while single-stranded (ss)DNA is stabiized in the filament's interior. The ATP-DnaA-oriC complex binds and stabilizes one strand of the AT-rich DNA unwinding element (DUE), permitting loading of DNA polymerase. After initiation quickly degrades to an ADP-DnaA complex that is not apt for DNA replication. Binds acidic phospholipids.</text>
</comment>
<comment type="subunit">
    <text evidence="1">Oligomerizes as a right-handed, spiral filament on DNA at oriC.</text>
</comment>
<comment type="subcellular location">
    <subcellularLocation>
        <location evidence="1">Cytoplasm</location>
    </subcellularLocation>
</comment>
<comment type="domain">
    <text evidence="1">Domain I is involved in oligomerization and binding regulators, domain II is flexibile and of varying length in different bacteria, domain III forms the AAA+ region, while domain IV binds dsDNA.</text>
</comment>
<comment type="similarity">
    <text evidence="1">Belongs to the DnaA family.</text>
</comment>
<keyword id="KW-0067">ATP-binding</keyword>
<keyword id="KW-0963">Cytoplasm</keyword>
<keyword id="KW-0235">DNA replication</keyword>
<keyword id="KW-0238">DNA-binding</keyword>
<keyword id="KW-0446">Lipid-binding</keyword>
<keyword id="KW-0547">Nucleotide-binding</keyword>
<name>DNAA_VIBPA</name>
<dbReference type="EMBL" id="BA000031">
    <property type="protein sequence ID" value="BAC58274.1"/>
    <property type="molecule type" value="Genomic_DNA"/>
</dbReference>
<dbReference type="RefSeq" id="NP_796390.1">
    <property type="nucleotide sequence ID" value="NC_004603.1"/>
</dbReference>
<dbReference type="RefSeq" id="WP_005488867.1">
    <property type="nucleotide sequence ID" value="NC_004603.1"/>
</dbReference>
<dbReference type="SMR" id="Q87TQ7"/>
<dbReference type="GeneID" id="1187467"/>
<dbReference type="KEGG" id="vpa:VP0011"/>
<dbReference type="PATRIC" id="fig|223926.6.peg.11"/>
<dbReference type="eggNOG" id="COG0593">
    <property type="taxonomic scope" value="Bacteria"/>
</dbReference>
<dbReference type="HOGENOM" id="CLU_026910_0_1_6"/>
<dbReference type="Proteomes" id="UP000002493">
    <property type="component" value="Chromosome 1"/>
</dbReference>
<dbReference type="GO" id="GO:0005737">
    <property type="term" value="C:cytoplasm"/>
    <property type="evidence" value="ECO:0007669"/>
    <property type="project" value="UniProtKB-SubCell"/>
</dbReference>
<dbReference type="GO" id="GO:0005886">
    <property type="term" value="C:plasma membrane"/>
    <property type="evidence" value="ECO:0007669"/>
    <property type="project" value="TreeGrafter"/>
</dbReference>
<dbReference type="GO" id="GO:0005524">
    <property type="term" value="F:ATP binding"/>
    <property type="evidence" value="ECO:0007669"/>
    <property type="project" value="UniProtKB-UniRule"/>
</dbReference>
<dbReference type="GO" id="GO:0016887">
    <property type="term" value="F:ATP hydrolysis activity"/>
    <property type="evidence" value="ECO:0007669"/>
    <property type="project" value="InterPro"/>
</dbReference>
<dbReference type="GO" id="GO:0003688">
    <property type="term" value="F:DNA replication origin binding"/>
    <property type="evidence" value="ECO:0007669"/>
    <property type="project" value="UniProtKB-UniRule"/>
</dbReference>
<dbReference type="GO" id="GO:0008289">
    <property type="term" value="F:lipid binding"/>
    <property type="evidence" value="ECO:0007669"/>
    <property type="project" value="UniProtKB-KW"/>
</dbReference>
<dbReference type="GO" id="GO:0006270">
    <property type="term" value="P:DNA replication initiation"/>
    <property type="evidence" value="ECO:0007669"/>
    <property type="project" value="UniProtKB-UniRule"/>
</dbReference>
<dbReference type="GO" id="GO:0006275">
    <property type="term" value="P:regulation of DNA replication"/>
    <property type="evidence" value="ECO:0007669"/>
    <property type="project" value="UniProtKB-UniRule"/>
</dbReference>
<dbReference type="CDD" id="cd00009">
    <property type="entry name" value="AAA"/>
    <property type="match status" value="1"/>
</dbReference>
<dbReference type="CDD" id="cd06571">
    <property type="entry name" value="Bac_DnaA_C"/>
    <property type="match status" value="1"/>
</dbReference>
<dbReference type="FunFam" id="1.10.1750.10:FF:000001">
    <property type="entry name" value="Chromosomal replication initiator protein DnaA"/>
    <property type="match status" value="1"/>
</dbReference>
<dbReference type="FunFam" id="1.10.8.60:FF:000003">
    <property type="entry name" value="Chromosomal replication initiator protein DnaA"/>
    <property type="match status" value="1"/>
</dbReference>
<dbReference type="FunFam" id="3.30.300.180:FF:000001">
    <property type="entry name" value="Chromosomal replication initiator protein DnaA"/>
    <property type="match status" value="1"/>
</dbReference>
<dbReference type="FunFam" id="3.40.50.300:FF:000103">
    <property type="entry name" value="Chromosomal replication initiator protein DnaA"/>
    <property type="match status" value="1"/>
</dbReference>
<dbReference type="Gene3D" id="1.10.1750.10">
    <property type="match status" value="1"/>
</dbReference>
<dbReference type="Gene3D" id="1.10.8.60">
    <property type="match status" value="1"/>
</dbReference>
<dbReference type="Gene3D" id="3.30.300.180">
    <property type="match status" value="1"/>
</dbReference>
<dbReference type="Gene3D" id="3.40.50.300">
    <property type="entry name" value="P-loop containing nucleotide triphosphate hydrolases"/>
    <property type="match status" value="1"/>
</dbReference>
<dbReference type="HAMAP" id="MF_00377">
    <property type="entry name" value="DnaA_bact"/>
    <property type="match status" value="1"/>
</dbReference>
<dbReference type="InterPro" id="IPR003593">
    <property type="entry name" value="AAA+_ATPase"/>
</dbReference>
<dbReference type="InterPro" id="IPR001957">
    <property type="entry name" value="Chromosome_initiator_DnaA"/>
</dbReference>
<dbReference type="InterPro" id="IPR020591">
    <property type="entry name" value="Chromosome_initiator_DnaA-like"/>
</dbReference>
<dbReference type="InterPro" id="IPR018312">
    <property type="entry name" value="Chromosome_initiator_DnaA_CS"/>
</dbReference>
<dbReference type="InterPro" id="IPR013159">
    <property type="entry name" value="DnaA_C"/>
</dbReference>
<dbReference type="InterPro" id="IPR013317">
    <property type="entry name" value="DnaA_dom"/>
</dbReference>
<dbReference type="InterPro" id="IPR024633">
    <property type="entry name" value="DnaA_N_dom"/>
</dbReference>
<dbReference type="InterPro" id="IPR038454">
    <property type="entry name" value="DnaA_N_sf"/>
</dbReference>
<dbReference type="InterPro" id="IPR055199">
    <property type="entry name" value="Hda_lid"/>
</dbReference>
<dbReference type="InterPro" id="IPR027417">
    <property type="entry name" value="P-loop_NTPase"/>
</dbReference>
<dbReference type="InterPro" id="IPR010921">
    <property type="entry name" value="Trp_repressor/repl_initiator"/>
</dbReference>
<dbReference type="NCBIfam" id="TIGR00362">
    <property type="entry name" value="DnaA"/>
    <property type="match status" value="1"/>
</dbReference>
<dbReference type="PANTHER" id="PTHR30050">
    <property type="entry name" value="CHROMOSOMAL REPLICATION INITIATOR PROTEIN DNAA"/>
    <property type="match status" value="1"/>
</dbReference>
<dbReference type="PANTHER" id="PTHR30050:SF2">
    <property type="entry name" value="CHROMOSOMAL REPLICATION INITIATOR PROTEIN DNAA"/>
    <property type="match status" value="1"/>
</dbReference>
<dbReference type="Pfam" id="PF00308">
    <property type="entry name" value="Bac_DnaA"/>
    <property type="match status" value="1"/>
</dbReference>
<dbReference type="Pfam" id="PF08299">
    <property type="entry name" value="Bac_DnaA_C"/>
    <property type="match status" value="1"/>
</dbReference>
<dbReference type="Pfam" id="PF11638">
    <property type="entry name" value="DnaA_N"/>
    <property type="match status" value="1"/>
</dbReference>
<dbReference type="Pfam" id="PF22688">
    <property type="entry name" value="Hda_lid"/>
    <property type="match status" value="1"/>
</dbReference>
<dbReference type="PRINTS" id="PR00051">
    <property type="entry name" value="DNAA"/>
</dbReference>
<dbReference type="SMART" id="SM00382">
    <property type="entry name" value="AAA"/>
    <property type="match status" value="1"/>
</dbReference>
<dbReference type="SMART" id="SM00760">
    <property type="entry name" value="Bac_DnaA_C"/>
    <property type="match status" value="1"/>
</dbReference>
<dbReference type="SUPFAM" id="SSF52540">
    <property type="entry name" value="P-loop containing nucleoside triphosphate hydrolases"/>
    <property type="match status" value="1"/>
</dbReference>
<dbReference type="SUPFAM" id="SSF48295">
    <property type="entry name" value="TrpR-like"/>
    <property type="match status" value="1"/>
</dbReference>
<dbReference type="PROSITE" id="PS01008">
    <property type="entry name" value="DNAA"/>
    <property type="match status" value="1"/>
</dbReference>